<protein>
    <recommendedName>
        <fullName evidence="1">GTPase Der</fullName>
    </recommendedName>
    <alternativeName>
        <fullName evidence="1">GTP-binding protein EngA</fullName>
    </alternativeName>
</protein>
<organism>
    <name type="scientific">Acidithiobacillus ferrooxidans (strain ATCC 23270 / DSM 14882 / CIP 104768 / NCIMB 8455)</name>
    <name type="common">Ferrobacillus ferrooxidans (strain ATCC 23270)</name>
    <dbReference type="NCBI Taxonomy" id="243159"/>
    <lineage>
        <taxon>Bacteria</taxon>
        <taxon>Pseudomonadati</taxon>
        <taxon>Pseudomonadota</taxon>
        <taxon>Acidithiobacillia</taxon>
        <taxon>Acidithiobacillales</taxon>
        <taxon>Acidithiobacillaceae</taxon>
        <taxon>Acidithiobacillus</taxon>
    </lineage>
</organism>
<comment type="function">
    <text evidence="1">GTPase that plays an essential role in the late steps of ribosome biogenesis.</text>
</comment>
<comment type="subunit">
    <text evidence="1">Associates with the 50S ribosomal subunit.</text>
</comment>
<comment type="similarity">
    <text evidence="1">Belongs to the TRAFAC class TrmE-Era-EngA-EngB-Septin-like GTPase superfamily. EngA (Der) GTPase family.</text>
</comment>
<accession>B7JC34</accession>
<reference key="1">
    <citation type="journal article" date="2008" name="BMC Genomics">
        <title>Acidithiobacillus ferrooxidans metabolism: from genome sequence to industrial applications.</title>
        <authorList>
            <person name="Valdes J."/>
            <person name="Pedroso I."/>
            <person name="Quatrini R."/>
            <person name="Dodson R.J."/>
            <person name="Tettelin H."/>
            <person name="Blake R. II"/>
            <person name="Eisen J.A."/>
            <person name="Holmes D.S."/>
        </authorList>
    </citation>
    <scope>NUCLEOTIDE SEQUENCE [LARGE SCALE GENOMIC DNA]</scope>
    <source>
        <strain>ATCC 23270 / DSM 14882 / CIP 104768 / NCIMB 8455</strain>
    </source>
</reference>
<feature type="chain" id="PRO_1000118634" description="GTPase Der">
    <location>
        <begin position="1"/>
        <end position="449"/>
    </location>
</feature>
<feature type="domain" description="EngA-type G 1">
    <location>
        <begin position="3"/>
        <end position="167"/>
    </location>
</feature>
<feature type="domain" description="EngA-type G 2">
    <location>
        <begin position="178"/>
        <end position="351"/>
    </location>
</feature>
<feature type="domain" description="KH-like" evidence="1">
    <location>
        <begin position="352"/>
        <end position="436"/>
    </location>
</feature>
<feature type="binding site" evidence="1">
    <location>
        <begin position="9"/>
        <end position="16"/>
    </location>
    <ligand>
        <name>GTP</name>
        <dbReference type="ChEBI" id="CHEBI:37565"/>
        <label>1</label>
    </ligand>
</feature>
<feature type="binding site" evidence="1">
    <location>
        <begin position="56"/>
        <end position="60"/>
    </location>
    <ligand>
        <name>GTP</name>
        <dbReference type="ChEBI" id="CHEBI:37565"/>
        <label>1</label>
    </ligand>
</feature>
<feature type="binding site" evidence="1">
    <location>
        <begin position="119"/>
        <end position="122"/>
    </location>
    <ligand>
        <name>GTP</name>
        <dbReference type="ChEBI" id="CHEBI:37565"/>
        <label>1</label>
    </ligand>
</feature>
<feature type="binding site" evidence="1">
    <location>
        <begin position="184"/>
        <end position="191"/>
    </location>
    <ligand>
        <name>GTP</name>
        <dbReference type="ChEBI" id="CHEBI:37565"/>
        <label>2</label>
    </ligand>
</feature>
<feature type="binding site" evidence="1">
    <location>
        <begin position="231"/>
        <end position="235"/>
    </location>
    <ligand>
        <name>GTP</name>
        <dbReference type="ChEBI" id="CHEBI:37565"/>
        <label>2</label>
    </ligand>
</feature>
<feature type="binding site" evidence="1">
    <location>
        <begin position="296"/>
        <end position="299"/>
    </location>
    <ligand>
        <name>GTP</name>
        <dbReference type="ChEBI" id="CHEBI:37565"/>
        <label>2</label>
    </ligand>
</feature>
<evidence type="ECO:0000255" key="1">
    <source>
        <dbReference type="HAMAP-Rule" id="MF_00195"/>
    </source>
</evidence>
<dbReference type="EMBL" id="CP001219">
    <property type="protein sequence ID" value="ACK80298.1"/>
    <property type="molecule type" value="Genomic_DNA"/>
</dbReference>
<dbReference type="RefSeq" id="WP_012536849.1">
    <property type="nucleotide sequence ID" value="NC_011761.1"/>
</dbReference>
<dbReference type="SMR" id="B7JC34"/>
<dbReference type="STRING" id="243159.AFE_1937"/>
<dbReference type="PaxDb" id="243159-AFE_1937"/>
<dbReference type="GeneID" id="65281090"/>
<dbReference type="KEGG" id="afr:AFE_1937"/>
<dbReference type="eggNOG" id="COG1160">
    <property type="taxonomic scope" value="Bacteria"/>
</dbReference>
<dbReference type="HOGENOM" id="CLU_016077_6_2_6"/>
<dbReference type="Proteomes" id="UP000001362">
    <property type="component" value="Chromosome"/>
</dbReference>
<dbReference type="GO" id="GO:0005525">
    <property type="term" value="F:GTP binding"/>
    <property type="evidence" value="ECO:0007669"/>
    <property type="project" value="UniProtKB-UniRule"/>
</dbReference>
<dbReference type="GO" id="GO:0043022">
    <property type="term" value="F:ribosome binding"/>
    <property type="evidence" value="ECO:0007669"/>
    <property type="project" value="TreeGrafter"/>
</dbReference>
<dbReference type="GO" id="GO:0042254">
    <property type="term" value="P:ribosome biogenesis"/>
    <property type="evidence" value="ECO:0007669"/>
    <property type="project" value="UniProtKB-KW"/>
</dbReference>
<dbReference type="CDD" id="cd01894">
    <property type="entry name" value="EngA1"/>
    <property type="match status" value="1"/>
</dbReference>
<dbReference type="CDD" id="cd01895">
    <property type="entry name" value="EngA2"/>
    <property type="match status" value="1"/>
</dbReference>
<dbReference type="FunFam" id="3.30.300.20:FF:000004">
    <property type="entry name" value="GTPase Der"/>
    <property type="match status" value="1"/>
</dbReference>
<dbReference type="FunFam" id="3.40.50.300:FF:000040">
    <property type="entry name" value="GTPase Der"/>
    <property type="match status" value="1"/>
</dbReference>
<dbReference type="FunFam" id="3.40.50.300:FF:000057">
    <property type="entry name" value="GTPase Der"/>
    <property type="match status" value="1"/>
</dbReference>
<dbReference type="Gene3D" id="3.30.300.20">
    <property type="match status" value="1"/>
</dbReference>
<dbReference type="Gene3D" id="3.40.50.300">
    <property type="entry name" value="P-loop containing nucleotide triphosphate hydrolases"/>
    <property type="match status" value="2"/>
</dbReference>
<dbReference type="HAMAP" id="MF_00195">
    <property type="entry name" value="GTPase_Der"/>
    <property type="match status" value="1"/>
</dbReference>
<dbReference type="InterPro" id="IPR031166">
    <property type="entry name" value="G_ENGA"/>
</dbReference>
<dbReference type="InterPro" id="IPR006073">
    <property type="entry name" value="GTP-bd"/>
</dbReference>
<dbReference type="InterPro" id="IPR016484">
    <property type="entry name" value="GTPase_Der"/>
</dbReference>
<dbReference type="InterPro" id="IPR032859">
    <property type="entry name" value="KH_dom-like"/>
</dbReference>
<dbReference type="InterPro" id="IPR015946">
    <property type="entry name" value="KH_dom-like_a/b"/>
</dbReference>
<dbReference type="InterPro" id="IPR027417">
    <property type="entry name" value="P-loop_NTPase"/>
</dbReference>
<dbReference type="InterPro" id="IPR005225">
    <property type="entry name" value="Small_GTP-bd"/>
</dbReference>
<dbReference type="NCBIfam" id="TIGR03594">
    <property type="entry name" value="GTPase_EngA"/>
    <property type="match status" value="1"/>
</dbReference>
<dbReference type="NCBIfam" id="TIGR00231">
    <property type="entry name" value="small_GTP"/>
    <property type="match status" value="2"/>
</dbReference>
<dbReference type="PANTHER" id="PTHR43834">
    <property type="entry name" value="GTPASE DER"/>
    <property type="match status" value="1"/>
</dbReference>
<dbReference type="PANTHER" id="PTHR43834:SF6">
    <property type="entry name" value="GTPASE DER"/>
    <property type="match status" value="1"/>
</dbReference>
<dbReference type="Pfam" id="PF14714">
    <property type="entry name" value="KH_dom-like"/>
    <property type="match status" value="1"/>
</dbReference>
<dbReference type="Pfam" id="PF01926">
    <property type="entry name" value="MMR_HSR1"/>
    <property type="match status" value="2"/>
</dbReference>
<dbReference type="PIRSF" id="PIRSF006485">
    <property type="entry name" value="GTP-binding_EngA"/>
    <property type="match status" value="1"/>
</dbReference>
<dbReference type="PRINTS" id="PR00326">
    <property type="entry name" value="GTP1OBG"/>
</dbReference>
<dbReference type="SUPFAM" id="SSF52540">
    <property type="entry name" value="P-loop containing nucleoside triphosphate hydrolases"/>
    <property type="match status" value="2"/>
</dbReference>
<dbReference type="PROSITE" id="PS51712">
    <property type="entry name" value="G_ENGA"/>
    <property type="match status" value="2"/>
</dbReference>
<gene>
    <name evidence="1" type="primary">der</name>
    <name type="synonym">engA</name>
    <name type="ordered locus">AFE_1937</name>
</gene>
<proteinExistence type="inferred from homology"/>
<sequence length="449" mass="49847">MTAVIALVGRPNVGKSTFFNRLTRTREALVADLPGLTRDRHYGTAQFEGRQYLVVDTGGFEPEEREGLVAAMAAQTRLAITEADAICFLVDAKEGLSTQDAEIAQELRRGGKPIYLVVNKMDAKGAVSELPEFYRLGLGTPYTISAAHGHGVEPLLEAIFSDLPTSEDDTADAARKGPRIAMLGRPNVGKSTLVNTMLGEKRVLVFDEPGTTRDSIRIPYERQGKPYVMIDTAGMRRRARVGEGLEKLSVLKTLSALREADVVLLVLDARLGIAEQDAHLVGVAVELGRPIVVVVNKWDGMTPEERKAVKQELERRLDFIRYAPVYTISALHGTGVGDLYKSIDQLWIDSRRHFSTAELNRALADVIETHQPPMVGGRRIKLRYCHQGGENPITLVFHGNQLTRLPGTYKRYLESAFRRALHLEAVPLRLVFRQGENPYDPQPKNGRQH</sequence>
<name>DER_ACIF2</name>
<keyword id="KW-0342">GTP-binding</keyword>
<keyword id="KW-0547">Nucleotide-binding</keyword>
<keyword id="KW-1185">Reference proteome</keyword>
<keyword id="KW-0677">Repeat</keyword>
<keyword id="KW-0690">Ribosome biogenesis</keyword>